<sequence>MPVLGVASKLRQPAVGPKPVHAALPIPNLGISVSRRCSSRPLEFATPERSMLSCQLTLKSTCEFGEKKALQGTAKEIEDSKIYTDWANHYLAKSGHKRLIKDLQQDIADGVLLADIIQIIANEKVEDINGCPRSQSQMIENVDVCLSFLAARGVNVQGLSAEEIRNGNLKAILGLFFSLSRYKQQQHHQQQYYQSLVELQQRVTHTAPQSEASQAKTQQDMQSSLTARYAAQSKHSGIATSQKKPTRLPGPSRVPAASSSNKAQGASNLNRRSQSFNSIDKNKPPNYANGNEKDSPKGPQPSSGINGNTQPPSTSGQPPASAIPSPSASKPWRSKSMNVKHSATSTMLTVKQPSPATSPTPSSDRLKPPVTEGVKSAPSGQKSMLEKFKLVNARTALRPPQAPSSGPNDGGREDDAFSESGEMEGFNSGLNSGGSTNSSPKVSPKLTPPKAGSKNFSNKKSLLQPKEKEEKTRDKNKACAEKSGKEEKDQVTTEAAPKKTSKIASLIPKGSKTAAAKKESLIPSSSGIPKPGSKVPTPKQTISPGSAASKESEKFRTSKGSSSQAFPKAITAEKASTPSLSTPLDGREAGQASPSSSCVMQVTHSSGQSPGNGAVQLPQQQQHSHPNTATVAPFIYRAHSENEGTSLPPADSCTSPTKMDSSYSKTAKQCLEEISGEDPEARRMRTVKNIADLRQNLEETMSSLRGTQISHSTLETTFDTTVTTEVNGRAIPNLTSRPSPMTWRLGQACPRLQAGDAPSMGAGYSRSGTSRFIHTDPSRFMYTTPLRRAAVSRLGNMSQIDMSEKASSDLDVSSEVDVGGYMSDGDILGKSLRADDINSGYMTDGGLNLYTRSLNRVPDTATSRDVIQRGVHDVTVDADSWDDSSSVSSGLSDTLDNISTDDLNTTSSISSYSNITVPSRKNTQLKTDAEKRSTTDETWDSPEELKKAEGDCDSHGDGAAKWKGATSGLAEDSEKTGQKASLSVSQTGSWRRGMSAQGGTPATARQKTSTSALKTPGKTDDAKASEKGKTPLKGSSLQRSPSDAGKSSGDEGKKPPSGIGRSTASSSFGYKKPSGVGASTMITSSGATITSGSATLGKIPKSAAIGGKSNAGRKTSLDGSQNQDDVVLHVSSKTTLQYRSLPRPSKSSTSGIPGRGGHRSSTSSIDSNVSSKSAGATTSKLREPTKIGSGRSSPVTVNQTDKEKEKVAVSDSESVSLSGSPKSSPTSASACGTQGLRQPGSKYPDIASPTFRRLFGAKAGGKSASAPNTEGAKSSSVVLSPSTSLARQGSLESPSSGTGSMGSAGGLSGSSSPLFNKPSDLTTDVISLSHSLASSPASVHSFTSGGLVWAANLSSSSAGSKDTPSYQSMTSLHTSSESIDLPLSHHGSLSGLTTGTHEVQSLLMRTGSVRSTLSESMQLDRNTLPKKGLRYTPSSRQANQEEGKEWLRSHSTGGLQDTGNQSPLVSPSAMSSSATGKYHFSNLVSPTNLSQFNLPAPSMMRSSSIPAQDSSFDLYDDAQLCGSATSLEERPRAVSHSGSFRDSMEEVHGSSLSLVSSTSSLYSTAEEKAHSEQIHKLRRELVASQEKVATLTSQLSANAHLVAAFEKSLGNMTGRLQSLTMTAEQKESELIELRETIEMLKAQNSAAQAAIQGALNGPDHPPKDLRIRRQHSSESVSSINSATSHSSIGSGNDADSKKKKKKNWLRSSFKQAFGKKKSTKPPSSHSDIEELTDSSLPASPKLPHNAGESGSSSMKPSQSASAICECTEAEAEIILQLKSELREKELKLTDIRLEALSSAHHLDQIREAMNRMQNEIEILKAENDRLKAETGNTAKPARPPSDSSSTASSSSSRQSLGLSLNNLNITESVTSDILLDDTGDATGHKDGRSVKIIVSISKGYGRAKDQKSQAYLIGSIGVSGKTKWDVLDGVIRRLFKEYVFRIDTSSSLGLSSDCIASYCIGDLIRSHNLEVPELLPCGYLVGDNNIITVNLKGVEENSLDSFVFDTLIPKPITQRYFNLLMEHHRIILSGPSGTGKTYLANKLAEYVITKSGRKKTEDAIATFNVDHKSSKELQQYLANLAEQCSADNNGVELPVVIILDNLHHVGSLSDIFNGFLNCKYNKCPYIIGTMNQGVSSSPNLELHHNFRWVLCANHTEPVKGFLGRYLRRKLIEMEIERNIRNNDLVKIIDWIPKTWHHLNSFLETHSSSDVTIGPRLFLPCPMDVEGSRVWFMDLWNYSLVPYVLEAVREGLQMYGKRAPWEDPSKWVLDTYPWSSASLPQEGPALLQLRPEDVGYEACTSTKEATTSKHIPQTDTEGDPLMNMLMKLQEAANYPSTQSCDGDSVSHREDILDTSIESTL</sequence>
<evidence type="ECO:0000250" key="1">
    <source>
        <dbReference type="UniProtKB" id="Q8IVL0"/>
    </source>
</evidence>
<evidence type="ECO:0000255" key="2"/>
<evidence type="ECO:0000255" key="3">
    <source>
        <dbReference type="PROSITE-ProRule" id="PRU00044"/>
    </source>
</evidence>
<evidence type="ECO:0000256" key="4">
    <source>
        <dbReference type="SAM" id="MobiDB-lite"/>
    </source>
</evidence>
<evidence type="ECO:0000269" key="5">
    <source>
    </source>
</evidence>
<evidence type="ECO:0000305" key="6"/>
<evidence type="ECO:0007744" key="7">
    <source>
    </source>
</evidence>
<name>NAV3_MOUSE</name>
<gene>
    <name type="primary">Nav3</name>
    <name type="synonym">Kiaa0938</name>
    <name type="synonym">Pomfil1</name>
</gene>
<dbReference type="EMBL" id="AC100120">
    <property type="status" value="NOT_ANNOTATED_CDS"/>
    <property type="molecule type" value="Genomic_DNA"/>
</dbReference>
<dbReference type="EMBL" id="AC122011">
    <property type="status" value="NOT_ANNOTATED_CDS"/>
    <property type="molecule type" value="Genomic_DNA"/>
</dbReference>
<dbReference type="EMBL" id="AC129336">
    <property type="status" value="NOT_ANNOTATED_CDS"/>
    <property type="molecule type" value="Genomic_DNA"/>
</dbReference>
<dbReference type="EMBL" id="AK122404">
    <property type="protein sequence ID" value="BAC65686.1"/>
    <property type="status" value="ALT_SEQ"/>
    <property type="molecule type" value="mRNA"/>
</dbReference>
<dbReference type="RefSeq" id="NP_001355744.1">
    <property type="nucleotide sequence ID" value="NM_001368815.1"/>
</dbReference>
<dbReference type="RefSeq" id="XP_006513738.1">
    <property type="nucleotide sequence ID" value="XM_006513675.3"/>
</dbReference>
<dbReference type="SMR" id="Q80TN7"/>
<dbReference type="BioGRID" id="234432">
    <property type="interactions" value="9"/>
</dbReference>
<dbReference type="FunCoup" id="Q80TN7">
    <property type="interactions" value="734"/>
</dbReference>
<dbReference type="IntAct" id="Q80TN7">
    <property type="interactions" value="2"/>
</dbReference>
<dbReference type="MINT" id="Q80TN7"/>
<dbReference type="STRING" id="10090.ENSMUSP00000032719"/>
<dbReference type="GlyGen" id="Q80TN7">
    <property type="glycosylation" value="5 sites, 1 N-linked glycan (1 site), 1 O-linked glycan (3 sites)"/>
</dbReference>
<dbReference type="iPTMnet" id="Q80TN7"/>
<dbReference type="PhosphoSitePlus" id="Q80TN7"/>
<dbReference type="jPOST" id="Q80TN7"/>
<dbReference type="PaxDb" id="10090-ENSMUSP00000032719"/>
<dbReference type="ProteomicsDB" id="287444"/>
<dbReference type="GeneID" id="260315"/>
<dbReference type="UCSC" id="uc007gzk.1">
    <property type="organism name" value="mouse"/>
</dbReference>
<dbReference type="AGR" id="MGI:2183703"/>
<dbReference type="MGI" id="MGI:2183703">
    <property type="gene designation" value="Nav3"/>
</dbReference>
<dbReference type="eggNOG" id="ENOG502QPT3">
    <property type="taxonomic scope" value="Eukaryota"/>
</dbReference>
<dbReference type="InParanoid" id="Q80TN7"/>
<dbReference type="PhylomeDB" id="Q80TN7"/>
<dbReference type="BioGRID-ORCS" id="260315">
    <property type="hits" value="5 hits in 77 CRISPR screens"/>
</dbReference>
<dbReference type="ChiTaRS" id="Nav3">
    <property type="organism name" value="mouse"/>
</dbReference>
<dbReference type="PRO" id="PR:Q80TN7"/>
<dbReference type="Proteomes" id="UP000000589">
    <property type="component" value="Unplaced"/>
</dbReference>
<dbReference type="RNAct" id="Q80TN7">
    <property type="molecule type" value="protein"/>
</dbReference>
<dbReference type="GO" id="GO:0005635">
    <property type="term" value="C:nuclear envelope"/>
    <property type="evidence" value="ECO:0000314"/>
    <property type="project" value="MGI"/>
</dbReference>
<dbReference type="GO" id="GO:0005640">
    <property type="term" value="C:nuclear outer membrane"/>
    <property type="evidence" value="ECO:0007669"/>
    <property type="project" value="UniProtKB-SubCell"/>
</dbReference>
<dbReference type="GO" id="GO:0005634">
    <property type="term" value="C:nucleus"/>
    <property type="evidence" value="ECO:0000314"/>
    <property type="project" value="MGI"/>
</dbReference>
<dbReference type="GO" id="GO:0005524">
    <property type="term" value="F:ATP binding"/>
    <property type="evidence" value="ECO:0007669"/>
    <property type="project" value="InterPro"/>
</dbReference>
<dbReference type="GO" id="GO:0016887">
    <property type="term" value="F:ATP hydrolysis activity"/>
    <property type="evidence" value="ECO:0007669"/>
    <property type="project" value="InterPro"/>
</dbReference>
<dbReference type="GO" id="GO:0022008">
    <property type="term" value="P:neurogenesis"/>
    <property type="evidence" value="ECO:0007669"/>
    <property type="project" value="InterPro"/>
</dbReference>
<dbReference type="CDD" id="cd21286">
    <property type="entry name" value="CH_NAV3"/>
    <property type="match status" value="1"/>
</dbReference>
<dbReference type="FunFam" id="1.10.418.10:FF:000018">
    <property type="entry name" value="Neuron navigator 2"/>
    <property type="match status" value="1"/>
</dbReference>
<dbReference type="FunFam" id="3.40.50.300:FF:000316">
    <property type="entry name" value="Putative neuron navigator 3"/>
    <property type="match status" value="1"/>
</dbReference>
<dbReference type="Gene3D" id="1.10.418.10">
    <property type="entry name" value="Calponin-like domain"/>
    <property type="match status" value="1"/>
</dbReference>
<dbReference type="Gene3D" id="3.40.50.300">
    <property type="entry name" value="P-loop containing nucleotide triphosphate hydrolases"/>
    <property type="match status" value="1"/>
</dbReference>
<dbReference type="InterPro" id="IPR003593">
    <property type="entry name" value="AAA+_ATPase"/>
</dbReference>
<dbReference type="InterPro" id="IPR003959">
    <property type="entry name" value="ATPase_AAA_core"/>
</dbReference>
<dbReference type="InterPro" id="IPR001715">
    <property type="entry name" value="CH_dom"/>
</dbReference>
<dbReference type="InterPro" id="IPR036872">
    <property type="entry name" value="CH_dom_sf"/>
</dbReference>
<dbReference type="InterPro" id="IPR039041">
    <property type="entry name" value="Nav/unc-53"/>
</dbReference>
<dbReference type="InterPro" id="IPR027417">
    <property type="entry name" value="P-loop_NTPase"/>
</dbReference>
<dbReference type="PANTHER" id="PTHR12784:SF18">
    <property type="entry name" value="NEURON NAVIGATOR 3"/>
    <property type="match status" value="1"/>
</dbReference>
<dbReference type="PANTHER" id="PTHR12784">
    <property type="entry name" value="STEERIN"/>
    <property type="match status" value="1"/>
</dbReference>
<dbReference type="Pfam" id="PF00004">
    <property type="entry name" value="AAA"/>
    <property type="match status" value="1"/>
</dbReference>
<dbReference type="Pfam" id="PF25408">
    <property type="entry name" value="AAA_lid_NAV1"/>
    <property type="match status" value="1"/>
</dbReference>
<dbReference type="Pfam" id="PF00307">
    <property type="entry name" value="CH"/>
    <property type="match status" value="1"/>
</dbReference>
<dbReference type="Pfam" id="PF23092">
    <property type="entry name" value="Ubiquitin_6"/>
    <property type="match status" value="1"/>
</dbReference>
<dbReference type="SMART" id="SM00382">
    <property type="entry name" value="AAA"/>
    <property type="match status" value="1"/>
</dbReference>
<dbReference type="SMART" id="SM00033">
    <property type="entry name" value="CH"/>
    <property type="match status" value="1"/>
</dbReference>
<dbReference type="SUPFAM" id="SSF47576">
    <property type="entry name" value="Calponin-homology domain, CH-domain"/>
    <property type="match status" value="1"/>
</dbReference>
<dbReference type="SUPFAM" id="SSF52540">
    <property type="entry name" value="P-loop containing nucleoside triphosphate hydrolases"/>
    <property type="match status" value="2"/>
</dbReference>
<dbReference type="PROSITE" id="PS50021">
    <property type="entry name" value="CH"/>
    <property type="match status" value="1"/>
</dbReference>
<keyword id="KW-0175">Coiled coil</keyword>
<keyword id="KW-0903">Direct protein sequencing</keyword>
<keyword id="KW-0472">Membrane</keyword>
<keyword id="KW-0539">Nucleus</keyword>
<keyword id="KW-0597">Phosphoprotein</keyword>
<keyword id="KW-1185">Reference proteome</keyword>
<protein>
    <recommendedName>
        <fullName>Neuron navigator 3</fullName>
    </recommendedName>
    <alternativeName>
        <fullName>Pore membrane and/or filament-interacting-like protein 1</fullName>
    </alternativeName>
</protein>
<proteinExistence type="evidence at protein level"/>
<reference key="1">
    <citation type="journal article" date="2009" name="PLoS Biol.">
        <title>Lineage-specific biology revealed by a finished genome assembly of the mouse.</title>
        <authorList>
            <person name="Church D.M."/>
            <person name="Goodstadt L."/>
            <person name="Hillier L.W."/>
            <person name="Zody M.C."/>
            <person name="Goldstein S."/>
            <person name="She X."/>
            <person name="Bult C.J."/>
            <person name="Agarwala R."/>
            <person name="Cherry J.L."/>
            <person name="DiCuccio M."/>
            <person name="Hlavina W."/>
            <person name="Kapustin Y."/>
            <person name="Meric P."/>
            <person name="Maglott D."/>
            <person name="Birtle Z."/>
            <person name="Marques A.C."/>
            <person name="Graves T."/>
            <person name="Zhou S."/>
            <person name="Teague B."/>
            <person name="Potamousis K."/>
            <person name="Churas C."/>
            <person name="Place M."/>
            <person name="Herschleb J."/>
            <person name="Runnheim R."/>
            <person name="Forrest D."/>
            <person name="Amos-Landgraf J."/>
            <person name="Schwartz D.C."/>
            <person name="Cheng Z."/>
            <person name="Lindblad-Toh K."/>
            <person name="Eichler E.E."/>
            <person name="Ponting C.P."/>
        </authorList>
    </citation>
    <scope>NUCLEOTIDE SEQUENCE [LARGE SCALE GENOMIC DNA]</scope>
    <source>
        <strain>C57BL/6J</strain>
    </source>
</reference>
<reference key="2">
    <citation type="journal article" date="2003" name="DNA Res.">
        <title>Prediction of the coding sequences of mouse homologues of KIAA gene: II. The complete nucleotide sequences of 400 mouse KIAA-homologous cDNAs identified by screening of terminal sequences of cDNA clones randomly sampled from size-fractionated libraries.</title>
        <authorList>
            <person name="Okazaki N."/>
            <person name="Kikuno R."/>
            <person name="Ohara R."/>
            <person name="Inamoto S."/>
            <person name="Aizawa H."/>
            <person name="Yuasa S."/>
            <person name="Nakajima D."/>
            <person name="Nagase T."/>
            <person name="Ohara O."/>
            <person name="Koga H."/>
        </authorList>
    </citation>
    <scope>NUCLEOTIDE SEQUENCE [LARGE SCALE MRNA] OF 724-2359</scope>
    <source>
        <tissue>Brain</tissue>
    </source>
</reference>
<reference key="3">
    <citation type="submission" date="2009-01" db="UniProtKB">
        <authorList>
            <person name="Lubec G."/>
            <person name="Sunyer B."/>
            <person name="Chen W.-Q."/>
        </authorList>
    </citation>
    <scope>PROTEIN SEQUENCE OF 1173-1182</scope>
    <scope>IDENTIFICATION BY MASS SPECTROMETRY</scope>
    <source>
        <strain>OF1</strain>
        <tissue>Hippocampus</tissue>
    </source>
</reference>
<reference key="4">
    <citation type="journal article" date="2002" name="Gene">
        <title>Pore membrane and/or filament interacting like protein 1 (POMFIL1) is predominantly expressed in the nervous system and encodes different protein isoforms.</title>
        <authorList>
            <person name="Coy J.F."/>
            <person name="Wiemann S."/>
            <person name="Bechmann I."/>
            <person name="Baechner D."/>
            <person name="Nitsch R."/>
            <person name="Kretz O."/>
            <person name="Christiansen H."/>
            <person name="Poustka A."/>
        </authorList>
    </citation>
    <scope>IDENTIFICATION</scope>
    <scope>TISSUE SPECIFICITY</scope>
    <scope>SUBCELLULAR LOCATION</scope>
    <scope>DEVELOPMENTAL STAGE</scope>
    <scope>INDUCTION</scope>
    <scope>FUNCTION</scope>
</reference>
<reference key="5">
    <citation type="journal article" date="2010" name="Cell">
        <title>A tissue-specific atlas of mouse protein phosphorylation and expression.</title>
        <authorList>
            <person name="Huttlin E.L."/>
            <person name="Jedrychowski M.P."/>
            <person name="Elias J.E."/>
            <person name="Goswami T."/>
            <person name="Rad R."/>
            <person name="Beausoleil S.A."/>
            <person name="Villen J."/>
            <person name="Haas W."/>
            <person name="Sowa M.E."/>
            <person name="Gygi S.P."/>
        </authorList>
    </citation>
    <scope>PHOSPHORYLATION [LARGE SCALE ANALYSIS] AT SER-1462</scope>
    <scope>IDENTIFICATION BY MASS SPECTROMETRY [LARGE SCALE ANALYSIS]</scope>
    <source>
        <tissue>Brain</tissue>
    </source>
</reference>
<comment type="function">
    <text evidence="1 5">Plays a role in cell migration (By similarity). May be involved in neuron regeneration. May regulate IL2 production by T-cells.</text>
</comment>
<comment type="subcellular location">
    <subcellularLocation>
        <location evidence="5">Nucleus outer membrane</location>
    </subcellularLocation>
</comment>
<comment type="tissue specificity">
    <text evidence="5">Present in neurons from central and peripheral nervous systems (at protein level). Highly expressed in brain cortex, midbrain, cerebellum and hippocampus.</text>
</comment>
<comment type="developmental stage">
    <text evidence="5">Specifically expressed in neuronal cells during development. First detectable at 9.5 dpc in prosencephalon. At 16.5 dpc, expressed in all brain areas, spinal cord and spinal ganglia. Within the brain, highest expression is found in maturing zones where neurons differentiate and lowest expression is found in ventricular zones where proliferation takes place. Brain expression remains high at later embryonic stages and during postnatal brain development.</text>
</comment>
<comment type="induction">
    <text evidence="5">In astrocytes after brain injury.</text>
</comment>
<comment type="similarity">
    <text evidence="6">Belongs to the Nav/unc-53 family.</text>
</comment>
<comment type="sequence caution" evidence="6">
    <conflict type="erroneous termination">
        <sequence resource="EMBL-CDS" id="BAC65686"/>
    </conflict>
    <text>Truncated C-terminus.</text>
</comment>
<organism>
    <name type="scientific">Mus musculus</name>
    <name type="common">Mouse</name>
    <dbReference type="NCBI Taxonomy" id="10090"/>
    <lineage>
        <taxon>Eukaryota</taxon>
        <taxon>Metazoa</taxon>
        <taxon>Chordata</taxon>
        <taxon>Craniata</taxon>
        <taxon>Vertebrata</taxon>
        <taxon>Euteleostomi</taxon>
        <taxon>Mammalia</taxon>
        <taxon>Eutheria</taxon>
        <taxon>Euarchontoglires</taxon>
        <taxon>Glires</taxon>
        <taxon>Rodentia</taxon>
        <taxon>Myomorpha</taxon>
        <taxon>Muroidea</taxon>
        <taxon>Muridae</taxon>
        <taxon>Murinae</taxon>
        <taxon>Mus</taxon>
        <taxon>Mus</taxon>
    </lineage>
</organism>
<accession>Q80TN7</accession>
<feature type="chain" id="PRO_0000286977" description="Neuron navigator 3">
    <location>
        <begin position="1"/>
        <end position="2359"/>
    </location>
</feature>
<feature type="domain" description="Calponin-homology (CH)" evidence="3">
    <location>
        <begin position="77"/>
        <end position="184"/>
    </location>
</feature>
<feature type="region of interest" description="Disordered" evidence="4">
    <location>
        <begin position="204"/>
        <end position="623"/>
    </location>
</feature>
<feature type="region of interest" description="Disordered" evidence="4">
    <location>
        <begin position="641"/>
        <end position="660"/>
    </location>
</feature>
<feature type="region of interest" description="Disordered" evidence="4">
    <location>
        <begin position="878"/>
        <end position="1315"/>
    </location>
</feature>
<feature type="region of interest" description="Disordered" evidence="4">
    <location>
        <begin position="1413"/>
        <end position="1472"/>
    </location>
</feature>
<feature type="region of interest" description="Disordered" evidence="4">
    <location>
        <begin position="1653"/>
        <end position="1758"/>
    </location>
</feature>
<feature type="region of interest" description="Disordered" evidence="4">
    <location>
        <begin position="1829"/>
        <end position="1855"/>
    </location>
</feature>
<feature type="coiled-coil region" evidence="2">
    <location>
        <begin position="680"/>
        <end position="708"/>
    </location>
</feature>
<feature type="coiled-coil region" evidence="2">
    <location>
        <begin position="1565"/>
        <end position="1656"/>
    </location>
</feature>
<feature type="coiled-coil region" evidence="2">
    <location>
        <begin position="1768"/>
        <end position="1835"/>
    </location>
</feature>
<feature type="compositionally biased region" description="Polar residues" evidence="4">
    <location>
        <begin position="204"/>
        <end position="226"/>
    </location>
</feature>
<feature type="compositionally biased region" description="Polar residues" evidence="4">
    <location>
        <begin position="233"/>
        <end position="243"/>
    </location>
</feature>
<feature type="compositionally biased region" description="Polar residues" evidence="4">
    <location>
        <begin position="257"/>
        <end position="279"/>
    </location>
</feature>
<feature type="compositionally biased region" description="Polar residues" evidence="4">
    <location>
        <begin position="300"/>
        <end position="317"/>
    </location>
</feature>
<feature type="compositionally biased region" description="Low complexity" evidence="4">
    <location>
        <begin position="318"/>
        <end position="329"/>
    </location>
</feature>
<feature type="compositionally biased region" description="Polar residues" evidence="4">
    <location>
        <begin position="335"/>
        <end position="352"/>
    </location>
</feature>
<feature type="compositionally biased region" description="Low complexity" evidence="4">
    <location>
        <begin position="353"/>
        <end position="363"/>
    </location>
</feature>
<feature type="compositionally biased region" description="Low complexity" evidence="4">
    <location>
        <begin position="427"/>
        <end position="439"/>
    </location>
</feature>
<feature type="compositionally biased region" description="Basic and acidic residues" evidence="4">
    <location>
        <begin position="465"/>
        <end position="491"/>
    </location>
</feature>
<feature type="compositionally biased region" description="Low complexity" evidence="4">
    <location>
        <begin position="522"/>
        <end position="536"/>
    </location>
</feature>
<feature type="compositionally biased region" description="Polar residues" evidence="4">
    <location>
        <begin position="592"/>
        <end position="623"/>
    </location>
</feature>
<feature type="compositionally biased region" description="Low complexity" evidence="4">
    <location>
        <begin position="883"/>
        <end position="896"/>
    </location>
</feature>
<feature type="compositionally biased region" description="Low complexity" evidence="4">
    <location>
        <begin position="904"/>
        <end position="916"/>
    </location>
</feature>
<feature type="compositionally biased region" description="Polar residues" evidence="4">
    <location>
        <begin position="917"/>
        <end position="926"/>
    </location>
</feature>
<feature type="compositionally biased region" description="Basic and acidic residues" evidence="4">
    <location>
        <begin position="943"/>
        <end position="960"/>
    </location>
</feature>
<feature type="compositionally biased region" description="Polar residues" evidence="4">
    <location>
        <begin position="978"/>
        <end position="989"/>
    </location>
</feature>
<feature type="compositionally biased region" description="Polar residues" evidence="4">
    <location>
        <begin position="997"/>
        <end position="1013"/>
    </location>
</feature>
<feature type="compositionally biased region" description="Basic and acidic residues" evidence="4">
    <location>
        <begin position="1017"/>
        <end position="1029"/>
    </location>
</feature>
<feature type="compositionally biased region" description="Low complexity" evidence="4">
    <location>
        <begin position="1077"/>
        <end position="1095"/>
    </location>
</feature>
<feature type="compositionally biased region" description="Low complexity" evidence="4">
    <location>
        <begin position="1160"/>
        <end position="1173"/>
    </location>
</feature>
<feature type="compositionally biased region" description="Polar residues" evidence="4">
    <location>
        <begin position="1190"/>
        <end position="1199"/>
    </location>
</feature>
<feature type="compositionally biased region" description="Low complexity" evidence="4">
    <location>
        <begin position="1209"/>
        <end position="1229"/>
    </location>
</feature>
<feature type="compositionally biased region" description="Low complexity" evidence="4">
    <location>
        <begin position="1256"/>
        <end position="1266"/>
    </location>
</feature>
<feature type="compositionally biased region" description="Low complexity" evidence="4">
    <location>
        <begin position="1274"/>
        <end position="1285"/>
    </location>
</feature>
<feature type="compositionally biased region" description="Gly residues" evidence="4">
    <location>
        <begin position="1299"/>
        <end position="1308"/>
    </location>
</feature>
<feature type="compositionally biased region" description="Basic and acidic residues" evidence="4">
    <location>
        <begin position="1439"/>
        <end position="1448"/>
    </location>
</feature>
<feature type="compositionally biased region" description="Polar residues" evidence="4">
    <location>
        <begin position="1449"/>
        <end position="1461"/>
    </location>
</feature>
<feature type="compositionally biased region" description="Low complexity" evidence="4">
    <location>
        <begin position="1462"/>
        <end position="1472"/>
    </location>
</feature>
<feature type="compositionally biased region" description="Low complexity" evidence="4">
    <location>
        <begin position="1675"/>
        <end position="1692"/>
    </location>
</feature>
<feature type="compositionally biased region" description="Low complexity" evidence="4">
    <location>
        <begin position="1749"/>
        <end position="1758"/>
    </location>
</feature>
<feature type="compositionally biased region" description="Low complexity" evidence="4">
    <location>
        <begin position="1841"/>
        <end position="1855"/>
    </location>
</feature>
<feature type="modified residue" description="Phosphoserine" evidence="7">
    <location>
        <position position="1462"/>
    </location>
</feature>
<feature type="modified residue" description="Phosphoserine" evidence="1">
    <location>
        <position position="1466"/>
    </location>
</feature>